<accession>Q53G59</accession>
<accession>A6NEN8</accession>
<accession>B7Z7B8</accession>
<accession>Q9HBX5</accession>
<evidence type="ECO:0000255" key="1">
    <source>
        <dbReference type="PROSITE-ProRule" id="PRU00037"/>
    </source>
</evidence>
<evidence type="ECO:0000269" key="2">
    <source>
    </source>
</evidence>
<evidence type="ECO:0000269" key="3">
    <source>
    </source>
</evidence>
<evidence type="ECO:0000269" key="4">
    <source>
    </source>
</evidence>
<evidence type="ECO:0000269" key="5">
    <source>
    </source>
</evidence>
<evidence type="ECO:0000269" key="6">
    <source>
    </source>
</evidence>
<evidence type="ECO:0000269" key="7">
    <source>
    </source>
</evidence>
<evidence type="ECO:0000269" key="8">
    <source>
    </source>
</evidence>
<evidence type="ECO:0000269" key="9">
    <source>
    </source>
</evidence>
<evidence type="ECO:0000269" key="10">
    <source>
    </source>
</evidence>
<evidence type="ECO:0000269" key="11">
    <source ref="3"/>
</evidence>
<evidence type="ECO:0000303" key="12">
    <source>
    </source>
</evidence>
<evidence type="ECO:0000303" key="13">
    <source>
    </source>
</evidence>
<evidence type="ECO:0000303" key="14">
    <source ref="1"/>
</evidence>
<evidence type="ECO:0000305" key="15"/>
<evidence type="ECO:0007829" key="16">
    <source>
        <dbReference type="PDB" id="2VPJ"/>
    </source>
</evidence>
<evidence type="ECO:0007829" key="17">
    <source>
        <dbReference type="PDB" id="6V7O"/>
    </source>
</evidence>
<evidence type="ECO:0007829" key="18">
    <source>
        <dbReference type="PDB" id="8OIO"/>
    </source>
</evidence>
<reference key="1">
    <citation type="submission" date="1999-09" db="EMBL/GenBank/DDBJ databases">
        <title>Sequence of a novel kelch-like protein, C3IP1.</title>
        <authorList>
            <person name="Du M."/>
            <person name="Zu Z."/>
            <person name="Liou J.-Y."/>
            <person name="Chu K.-Y."/>
            <person name="Sansores Garcia L."/>
            <person name="Yeh E."/>
            <person name="Wu K.K."/>
        </authorList>
    </citation>
    <scope>NUCLEOTIDE SEQUENCE [MRNA] (ISOFORM 1)</scope>
</reference>
<reference key="2">
    <citation type="journal article" date="2004" name="Nat. Genet.">
        <title>Complete sequencing and characterization of 21,243 full-length human cDNAs.</title>
        <authorList>
            <person name="Ota T."/>
            <person name="Suzuki Y."/>
            <person name="Nishikawa T."/>
            <person name="Otsuki T."/>
            <person name="Sugiyama T."/>
            <person name="Irie R."/>
            <person name="Wakamatsu A."/>
            <person name="Hayashi K."/>
            <person name="Sato H."/>
            <person name="Nagai K."/>
            <person name="Kimura K."/>
            <person name="Makita H."/>
            <person name="Sekine M."/>
            <person name="Obayashi M."/>
            <person name="Nishi T."/>
            <person name="Shibahara T."/>
            <person name="Tanaka T."/>
            <person name="Ishii S."/>
            <person name="Yamamoto J."/>
            <person name="Saito K."/>
            <person name="Kawai Y."/>
            <person name="Isono Y."/>
            <person name="Nakamura Y."/>
            <person name="Nagahari K."/>
            <person name="Murakami K."/>
            <person name="Yasuda T."/>
            <person name="Iwayanagi T."/>
            <person name="Wagatsuma M."/>
            <person name="Shiratori A."/>
            <person name="Sudo H."/>
            <person name="Hosoiri T."/>
            <person name="Kaku Y."/>
            <person name="Kodaira H."/>
            <person name="Kondo H."/>
            <person name="Sugawara M."/>
            <person name="Takahashi M."/>
            <person name="Kanda K."/>
            <person name="Yokoi T."/>
            <person name="Furuya T."/>
            <person name="Kikkawa E."/>
            <person name="Omura Y."/>
            <person name="Abe K."/>
            <person name="Kamihara K."/>
            <person name="Katsuta N."/>
            <person name="Sato K."/>
            <person name="Tanikawa M."/>
            <person name="Yamazaki M."/>
            <person name="Ninomiya K."/>
            <person name="Ishibashi T."/>
            <person name="Yamashita H."/>
            <person name="Murakawa K."/>
            <person name="Fujimori K."/>
            <person name="Tanai H."/>
            <person name="Kimata M."/>
            <person name="Watanabe M."/>
            <person name="Hiraoka S."/>
            <person name="Chiba Y."/>
            <person name="Ishida S."/>
            <person name="Ono Y."/>
            <person name="Takiguchi S."/>
            <person name="Watanabe S."/>
            <person name="Yosida M."/>
            <person name="Hotuta T."/>
            <person name="Kusano J."/>
            <person name="Kanehori K."/>
            <person name="Takahashi-Fujii A."/>
            <person name="Hara H."/>
            <person name="Tanase T.-O."/>
            <person name="Nomura Y."/>
            <person name="Togiya S."/>
            <person name="Komai F."/>
            <person name="Hara R."/>
            <person name="Takeuchi K."/>
            <person name="Arita M."/>
            <person name="Imose N."/>
            <person name="Musashino K."/>
            <person name="Yuuki H."/>
            <person name="Oshima A."/>
            <person name="Sasaki N."/>
            <person name="Aotsuka S."/>
            <person name="Yoshikawa Y."/>
            <person name="Matsunawa H."/>
            <person name="Ichihara T."/>
            <person name="Shiohata N."/>
            <person name="Sano S."/>
            <person name="Moriya S."/>
            <person name="Momiyama H."/>
            <person name="Satoh N."/>
            <person name="Takami S."/>
            <person name="Terashima Y."/>
            <person name="Suzuki O."/>
            <person name="Nakagawa S."/>
            <person name="Senoh A."/>
            <person name="Mizoguchi H."/>
            <person name="Goto Y."/>
            <person name="Shimizu F."/>
            <person name="Wakebe H."/>
            <person name="Hishigaki H."/>
            <person name="Watanabe T."/>
            <person name="Sugiyama A."/>
            <person name="Takemoto M."/>
            <person name="Kawakami B."/>
            <person name="Yamazaki M."/>
            <person name="Watanabe K."/>
            <person name="Kumagai A."/>
            <person name="Itakura S."/>
            <person name="Fukuzumi Y."/>
            <person name="Fujimori Y."/>
            <person name="Komiyama M."/>
            <person name="Tashiro H."/>
            <person name="Tanigami A."/>
            <person name="Fujiwara T."/>
            <person name="Ono T."/>
            <person name="Yamada K."/>
            <person name="Fujii Y."/>
            <person name="Ozaki K."/>
            <person name="Hirao M."/>
            <person name="Ohmori Y."/>
            <person name="Kawabata A."/>
            <person name="Hikiji T."/>
            <person name="Kobatake N."/>
            <person name="Inagaki H."/>
            <person name="Ikema Y."/>
            <person name="Okamoto S."/>
            <person name="Okitani R."/>
            <person name="Kawakami T."/>
            <person name="Noguchi S."/>
            <person name="Itoh T."/>
            <person name="Shigeta K."/>
            <person name="Senba T."/>
            <person name="Matsumura K."/>
            <person name="Nakajima Y."/>
            <person name="Mizuno T."/>
            <person name="Morinaga M."/>
            <person name="Sasaki M."/>
            <person name="Togashi T."/>
            <person name="Oyama M."/>
            <person name="Hata H."/>
            <person name="Watanabe M."/>
            <person name="Komatsu T."/>
            <person name="Mizushima-Sugano J."/>
            <person name="Satoh T."/>
            <person name="Shirai Y."/>
            <person name="Takahashi Y."/>
            <person name="Nakagawa K."/>
            <person name="Okumura K."/>
            <person name="Nagase T."/>
            <person name="Nomura N."/>
            <person name="Kikuchi H."/>
            <person name="Masuho Y."/>
            <person name="Yamashita R."/>
            <person name="Nakai K."/>
            <person name="Yada T."/>
            <person name="Nakamura Y."/>
            <person name="Ohara O."/>
            <person name="Isogai T."/>
            <person name="Sugano S."/>
        </authorList>
    </citation>
    <scope>NUCLEOTIDE SEQUENCE [LARGE SCALE MRNA] (ISOFORMS 1 AND 2)</scope>
    <source>
        <tissue>Teratocarcinoma</tissue>
        <tissue>Testis</tissue>
        <tissue>Thyroid</tissue>
    </source>
</reference>
<reference key="3">
    <citation type="submission" date="2005-04" db="EMBL/GenBank/DDBJ databases">
        <authorList>
            <person name="Suzuki Y."/>
            <person name="Sugano S."/>
            <person name="Totoki Y."/>
            <person name="Toyoda A."/>
            <person name="Takeda T."/>
            <person name="Sakaki Y."/>
            <person name="Tanaka A."/>
            <person name="Yokoyama S."/>
        </authorList>
    </citation>
    <scope>NUCLEOTIDE SEQUENCE [LARGE SCALE MRNA] (ISOFORM 1)</scope>
</reference>
<reference key="4">
    <citation type="journal article" date="2006" name="Nature">
        <title>The DNA sequence and biological annotation of human chromosome 1.</title>
        <authorList>
            <person name="Gregory S.G."/>
            <person name="Barlow K.F."/>
            <person name="McLay K.E."/>
            <person name="Kaul R."/>
            <person name="Swarbreck D."/>
            <person name="Dunham A."/>
            <person name="Scott C.E."/>
            <person name="Howe K.L."/>
            <person name="Woodfine K."/>
            <person name="Spencer C.C.A."/>
            <person name="Jones M.C."/>
            <person name="Gillson C."/>
            <person name="Searle S."/>
            <person name="Zhou Y."/>
            <person name="Kokocinski F."/>
            <person name="McDonald L."/>
            <person name="Evans R."/>
            <person name="Phillips K."/>
            <person name="Atkinson A."/>
            <person name="Cooper R."/>
            <person name="Jones C."/>
            <person name="Hall R.E."/>
            <person name="Andrews T.D."/>
            <person name="Lloyd C."/>
            <person name="Ainscough R."/>
            <person name="Almeida J.P."/>
            <person name="Ambrose K.D."/>
            <person name="Anderson F."/>
            <person name="Andrew R.W."/>
            <person name="Ashwell R.I.S."/>
            <person name="Aubin K."/>
            <person name="Babbage A.K."/>
            <person name="Bagguley C.L."/>
            <person name="Bailey J."/>
            <person name="Beasley H."/>
            <person name="Bethel G."/>
            <person name="Bird C.P."/>
            <person name="Bray-Allen S."/>
            <person name="Brown J.Y."/>
            <person name="Brown A.J."/>
            <person name="Buckley D."/>
            <person name="Burton J."/>
            <person name="Bye J."/>
            <person name="Carder C."/>
            <person name="Chapman J.C."/>
            <person name="Clark S.Y."/>
            <person name="Clarke G."/>
            <person name="Clee C."/>
            <person name="Cobley V."/>
            <person name="Collier R.E."/>
            <person name="Corby N."/>
            <person name="Coville G.J."/>
            <person name="Davies J."/>
            <person name="Deadman R."/>
            <person name="Dunn M."/>
            <person name="Earthrowl M."/>
            <person name="Ellington A.G."/>
            <person name="Errington H."/>
            <person name="Frankish A."/>
            <person name="Frankland J."/>
            <person name="French L."/>
            <person name="Garner P."/>
            <person name="Garnett J."/>
            <person name="Gay L."/>
            <person name="Ghori M.R.J."/>
            <person name="Gibson R."/>
            <person name="Gilby L.M."/>
            <person name="Gillett W."/>
            <person name="Glithero R.J."/>
            <person name="Grafham D.V."/>
            <person name="Griffiths C."/>
            <person name="Griffiths-Jones S."/>
            <person name="Grocock R."/>
            <person name="Hammond S."/>
            <person name="Harrison E.S.I."/>
            <person name="Hart E."/>
            <person name="Haugen E."/>
            <person name="Heath P.D."/>
            <person name="Holmes S."/>
            <person name="Holt K."/>
            <person name="Howden P.J."/>
            <person name="Hunt A.R."/>
            <person name="Hunt S.E."/>
            <person name="Hunter G."/>
            <person name="Isherwood J."/>
            <person name="James R."/>
            <person name="Johnson C."/>
            <person name="Johnson D."/>
            <person name="Joy A."/>
            <person name="Kay M."/>
            <person name="Kershaw J.K."/>
            <person name="Kibukawa M."/>
            <person name="Kimberley A.M."/>
            <person name="King A."/>
            <person name="Knights A.J."/>
            <person name="Lad H."/>
            <person name="Laird G."/>
            <person name="Lawlor S."/>
            <person name="Leongamornlert D.A."/>
            <person name="Lloyd D.M."/>
            <person name="Loveland J."/>
            <person name="Lovell J."/>
            <person name="Lush M.J."/>
            <person name="Lyne R."/>
            <person name="Martin S."/>
            <person name="Mashreghi-Mohammadi M."/>
            <person name="Matthews L."/>
            <person name="Matthews N.S.W."/>
            <person name="McLaren S."/>
            <person name="Milne S."/>
            <person name="Mistry S."/>
            <person name="Moore M.J.F."/>
            <person name="Nickerson T."/>
            <person name="O'Dell C.N."/>
            <person name="Oliver K."/>
            <person name="Palmeiri A."/>
            <person name="Palmer S.A."/>
            <person name="Parker A."/>
            <person name="Patel D."/>
            <person name="Pearce A.V."/>
            <person name="Peck A.I."/>
            <person name="Pelan S."/>
            <person name="Phelps K."/>
            <person name="Phillimore B.J."/>
            <person name="Plumb R."/>
            <person name="Rajan J."/>
            <person name="Raymond C."/>
            <person name="Rouse G."/>
            <person name="Saenphimmachak C."/>
            <person name="Sehra H.K."/>
            <person name="Sheridan E."/>
            <person name="Shownkeen R."/>
            <person name="Sims S."/>
            <person name="Skuce C.D."/>
            <person name="Smith M."/>
            <person name="Steward C."/>
            <person name="Subramanian S."/>
            <person name="Sycamore N."/>
            <person name="Tracey A."/>
            <person name="Tromans A."/>
            <person name="Van Helmond Z."/>
            <person name="Wall M."/>
            <person name="Wallis J.M."/>
            <person name="White S."/>
            <person name="Whitehead S.L."/>
            <person name="Wilkinson J.E."/>
            <person name="Willey D.L."/>
            <person name="Williams H."/>
            <person name="Wilming L."/>
            <person name="Wray P.W."/>
            <person name="Wu Z."/>
            <person name="Coulson A."/>
            <person name="Vaudin M."/>
            <person name="Sulston J.E."/>
            <person name="Durbin R.M."/>
            <person name="Hubbard T."/>
            <person name="Wooster R."/>
            <person name="Dunham I."/>
            <person name="Carter N.P."/>
            <person name="McVean G."/>
            <person name="Ross M.T."/>
            <person name="Harrow J."/>
            <person name="Olson M.V."/>
            <person name="Beck S."/>
            <person name="Rogers J."/>
            <person name="Bentley D.R."/>
        </authorList>
    </citation>
    <scope>NUCLEOTIDE SEQUENCE [LARGE SCALE GENOMIC DNA]</scope>
</reference>
<reference key="5">
    <citation type="journal article" date="2004" name="Genome Res.">
        <title>The status, quality, and expansion of the NIH full-length cDNA project: the Mammalian Gene Collection (MGC).</title>
        <authorList>
            <consortium name="The MGC Project Team"/>
        </authorList>
    </citation>
    <scope>NUCLEOTIDE SEQUENCE [LARGE SCALE MRNA] (ISOFORM 1)</scope>
    <source>
        <tissue>Kidney adenocarcinoma</tissue>
    </source>
</reference>
<reference key="6">
    <citation type="journal article" date="2004" name="Exp. Cell Res.">
        <title>hDKIR, a human homologue of the Drosophila kelch protein, involved in a ring-like structure.</title>
        <authorList>
            <person name="Mai A."/>
            <person name="Jung S.K."/>
            <person name="Yonehara S."/>
        </authorList>
    </citation>
    <scope>TISSUE SPECIFICITY</scope>
    <scope>INTERACTION WITH KLHL2</scope>
</reference>
<reference key="7">
    <citation type="journal article" date="2005" name="Immunology">
        <title>Identification of specific autoantigens in Sjoegren's syndrome by SEREX.</title>
        <authorList>
            <person name="Uchida K."/>
            <person name="Akita Y."/>
            <person name="Matsuo K."/>
            <person name="Fujiwara S."/>
            <person name="Nakagawa A."/>
            <person name="Kazaoka Y."/>
            <person name="Hachiya H."/>
            <person name="Naganawa Y."/>
            <person name="Oh-Iwa I."/>
            <person name="Ohura K."/>
            <person name="Saga S."/>
            <person name="Kawai T."/>
            <person name="Matsumoto Y."/>
            <person name="Shimozato K."/>
            <person name="Kozaki K."/>
        </authorList>
    </citation>
    <scope>TISSUE SPECIFICITY</scope>
</reference>
<reference key="8">
    <citation type="journal article" date="2006" name="Nat. Cell Biol.">
        <title>The KLHL12-cullin-3 ubiquitin ligase negatively regulates the Wnt-beta-catenin pathway by targeting Dishevelled for degradation.</title>
        <authorList>
            <person name="Angers S."/>
            <person name="Thorpe C.J."/>
            <person name="Biechele T.L."/>
            <person name="Goldenberg S.J."/>
            <person name="Zheng N."/>
            <person name="Maccoss M.J."/>
            <person name="Moon R.T."/>
        </authorList>
    </citation>
    <scope>FUNCTION</scope>
    <scope>IDENTIFICATION BY MASS SPECTROMETRY</scope>
    <scope>INTERACTION WITH CUL3 AND DVL3</scope>
</reference>
<reference key="9">
    <citation type="journal article" date="2008" name="J. Biol. Chem.">
        <title>BTB Protein KLHL12 targets the dopamine D4 receptor for ubiquitination by a Cul3-based E3 ligase.</title>
        <authorList>
            <person name="Rondou P."/>
            <person name="Haegeman G."/>
            <person name="Vanhoenacker P."/>
            <person name="Van Craenenbroeck K."/>
        </authorList>
    </citation>
    <scope>FUNCTION</scope>
    <scope>INTERACTION WITH DRD4</scope>
</reference>
<reference key="10">
    <citation type="journal article" date="2010" name="Cell. Signal.">
        <title>KLHL12-mediated ubiquitination of the dopamine D4 receptor does not target the receptor for degradation.</title>
        <authorList>
            <person name="Rondou P."/>
            <person name="Skieterska K."/>
            <person name="Packeu A."/>
            <person name="Lintermans B."/>
            <person name="Vanhoenacker P."/>
            <person name="Vauquelin G."/>
            <person name="Haegeman G."/>
            <person name="Van Craenenbroeck K."/>
        </authorList>
    </citation>
    <scope>FUNCTION</scope>
</reference>
<reference key="11">
    <citation type="journal article" date="2012" name="Nature">
        <title>Ubiquitin-dependent regulation of COPII coat size and function.</title>
        <authorList>
            <person name="Jin L."/>
            <person name="Pahuja K.B."/>
            <person name="Wickliffe K.E."/>
            <person name="Gorur A."/>
            <person name="Baumgartel C."/>
            <person name="Schekman R."/>
            <person name="Rape M."/>
        </authorList>
    </citation>
    <scope>IDENTIFICATION IN THE BCR(KLHL12) COMPLEX</scope>
    <scope>FUNCTION</scope>
    <scope>SUBCELLULAR LOCATION</scope>
    <scope>INTERACTION WITH SEC31A</scope>
    <scope>MUTAGENESIS OF 289-PHE-GLY-290</scope>
</reference>
<reference key="12">
    <citation type="journal article" date="2016" name="Cell">
        <title>Two distinct types of E3 ligases work in unison to regulate substrate ubiquitylation.</title>
        <authorList>
            <person name="Scott D.C."/>
            <person name="Rhee D.Y."/>
            <person name="Duda D.M."/>
            <person name="Kelsall I.R."/>
            <person name="Olszewski J.L."/>
            <person name="Paulo J.A."/>
            <person name="de Jong A."/>
            <person name="Ovaa H."/>
            <person name="Alpi A.F."/>
            <person name="Harper J.W."/>
            <person name="Schulman B.A."/>
        </authorList>
    </citation>
    <scope>FUNCTION</scope>
</reference>
<reference key="13">
    <citation type="journal article" date="2016" name="Cell">
        <title>Regulation of the CUL3 ubiquitin ligase by a calcium-dependent co-adaptor.</title>
        <authorList>
            <person name="McGourty C.A."/>
            <person name="Akopian D."/>
            <person name="Walsh C."/>
            <person name="Gorur A."/>
            <person name="Werner A."/>
            <person name="Schekman R."/>
            <person name="Bautista D."/>
            <person name="Rape M."/>
        </authorList>
    </citation>
    <scope>FUNCTION</scope>
    <scope>SUBCELLULAR LOCATION</scope>
    <scope>INTERACTION WITH PEF1 AND PDCD6</scope>
    <scope>MUTAGENESIS OF</scope>
</reference>
<reference key="14">
    <citation type="journal article" date="2018" name="Science">
        <title>Dimerization quality control ensures neuronal development and survival.</title>
        <authorList>
            <person name="Mena E.L."/>
            <person name="Kjolby R.A.S."/>
            <person name="Saxton R.A."/>
            <person name="Werner A."/>
            <person name="Lew B.G."/>
            <person name="Boyle J.M."/>
            <person name="Harland R."/>
            <person name="Rape M."/>
        </authorList>
    </citation>
    <scope>UBIQUITINATION</scope>
    <scope>MUTAGENESIS OF HIS-15; ASP-34; VAL-50 AND ALA-60</scope>
</reference>
<reference key="15">
    <citation type="journal article" date="2013" name="J. Biol. Chem.">
        <title>Structural basis for Cul3 assembly with the BTB-Kelch family of E3 ubiquitin ligases.</title>
        <authorList>
            <person name="Canning P."/>
            <person name="Cooper C.D."/>
            <person name="Krojer T."/>
            <person name="Murray J.W."/>
            <person name="Pike A.C."/>
            <person name="Chaikuad A."/>
            <person name="Keates T."/>
            <person name="Thangaratnarajah C."/>
            <person name="Hojzan V."/>
            <person name="Marsden B.D."/>
            <person name="Gileadi O."/>
            <person name="Knapp S."/>
            <person name="von Delft F."/>
            <person name="Bullock A.N."/>
        </authorList>
    </citation>
    <scope>X-RAY CRYSTALLOGRAPHY (1.85 ANGSTROMS) OF 268-567</scope>
</reference>
<feature type="chain" id="PRO_0000234349" description="Kelch-like protein 12">
    <location>
        <begin position="1"/>
        <end position="568"/>
    </location>
</feature>
<feature type="domain" description="BTB" evidence="1">
    <location>
        <begin position="33"/>
        <end position="100"/>
    </location>
</feature>
<feature type="domain" description="BACK">
    <location>
        <begin position="135"/>
        <end position="236"/>
    </location>
</feature>
<feature type="repeat" description="Kelch 1">
    <location>
        <begin position="282"/>
        <end position="329"/>
    </location>
</feature>
<feature type="repeat" description="Kelch 2">
    <location>
        <begin position="331"/>
        <end position="379"/>
    </location>
</feature>
<feature type="repeat" description="Kelch 3">
    <location>
        <begin position="380"/>
        <end position="426"/>
    </location>
</feature>
<feature type="repeat" description="Kelch 4">
    <location>
        <begin position="427"/>
        <end position="473"/>
    </location>
</feature>
<feature type="repeat" description="Kelch 5">
    <location>
        <begin position="475"/>
        <end position="520"/>
    </location>
</feature>
<feature type="repeat" description="Kelch 6">
    <location>
        <begin position="522"/>
        <end position="567"/>
    </location>
</feature>
<feature type="region of interest" description="Interaction with DVL3" evidence="4">
    <location>
        <begin position="405"/>
        <end position="568"/>
    </location>
</feature>
<feature type="splice variant" id="VSP_042975" description="In isoform 2." evidence="12">
    <original>M</original>
    <variation>MDVNKFEASVGFLDVKKFLSTWKLQNPRTHFVLSPHCFM</variation>
    <location>
        <position position="1"/>
    </location>
</feature>
<feature type="sequence variant" id="VAR_050049" description="In dbSNP:rs12569087.">
    <original>P</original>
    <variation>L</variation>
    <location>
        <position position="72"/>
    </location>
</feature>
<feature type="mutagenesis site" description="Abolished ubiquitination by the SCF(FBXL17) complex." evidence="10">
    <original>H</original>
    <variation>A</variation>
    <location>
        <position position="15"/>
    </location>
</feature>
<feature type="mutagenesis site" description="Abolished ubiquitination by the SCF(FBXL17) complex." evidence="10">
    <original>D</original>
    <variation>A</variation>
    <location>
        <position position="34"/>
    </location>
</feature>
<feature type="mutagenesis site" description="Increased recognition and ubiquitination by the SCF(FBXL17) complex." evidence="10">
    <original>V</original>
    <variation>A</variation>
    <location>
        <position position="50"/>
    </location>
</feature>
<feature type="mutagenesis site" description="Abolished ubiquitination by the SCF(FBXL17) complex." evidence="10">
    <original>A</original>
    <variation>E</variation>
    <variation>K</variation>
    <location>
        <position position="60"/>
    </location>
</feature>
<feature type="mutagenesis site" description="Abolishes interaction with SEC31A and subsequent monoubiquitination of SEC31A. Abolishes ubiquitination of PEF1." evidence="7 11">
    <original>FG</original>
    <variation>AA</variation>
    <location>
        <begin position="289"/>
        <end position="290"/>
    </location>
</feature>
<feature type="sequence conflict" description="In Ref. 3; BAD96792." evidence="15" ref="3">
    <original>C</original>
    <variation>R</variation>
    <location>
        <position position="122"/>
    </location>
</feature>
<feature type="sequence conflict" description="In Ref. 3; BAD96792." evidence="15" ref="3">
    <original>FE</original>
    <variation>LG</variation>
    <location>
        <begin position="197"/>
        <end position="198"/>
    </location>
</feature>
<feature type="sequence conflict" description="In Ref. 3; BAD96792." evidence="15" ref="3">
    <original>T</original>
    <variation>A</variation>
    <location>
        <position position="394"/>
    </location>
</feature>
<feature type="strand" evidence="16">
    <location>
        <begin position="281"/>
        <end position="286"/>
    </location>
</feature>
<feature type="turn" evidence="16">
    <location>
        <begin position="291"/>
        <end position="293"/>
    </location>
</feature>
<feature type="strand" evidence="16">
    <location>
        <begin position="299"/>
        <end position="303"/>
    </location>
</feature>
<feature type="turn" evidence="16">
    <location>
        <begin position="304"/>
        <end position="307"/>
    </location>
</feature>
<feature type="strand" evidence="16">
    <location>
        <begin position="308"/>
        <end position="311"/>
    </location>
</feature>
<feature type="strand" evidence="16">
    <location>
        <begin position="323"/>
        <end position="327"/>
    </location>
</feature>
<feature type="strand" evidence="16">
    <location>
        <begin position="330"/>
        <end position="334"/>
    </location>
</feature>
<feature type="strand" evidence="18">
    <location>
        <begin position="339"/>
        <end position="342"/>
    </location>
</feature>
<feature type="strand" evidence="16">
    <location>
        <begin position="346"/>
        <end position="350"/>
    </location>
</feature>
<feature type="strand" evidence="16">
    <location>
        <begin position="360"/>
        <end position="362"/>
    </location>
</feature>
<feature type="strand" evidence="16">
    <location>
        <begin position="373"/>
        <end position="377"/>
    </location>
</feature>
<feature type="strand" evidence="16">
    <location>
        <begin position="380"/>
        <end position="384"/>
    </location>
</feature>
<feature type="strand" evidence="16">
    <location>
        <begin position="395"/>
        <end position="400"/>
    </location>
</feature>
<feature type="turn" evidence="16">
    <location>
        <begin position="401"/>
        <end position="404"/>
    </location>
</feature>
<feature type="strand" evidence="16">
    <location>
        <begin position="405"/>
        <end position="411"/>
    </location>
</feature>
<feature type="strand" evidence="16">
    <location>
        <begin position="420"/>
        <end position="424"/>
    </location>
</feature>
<feature type="strand" evidence="16">
    <location>
        <begin position="427"/>
        <end position="431"/>
    </location>
</feature>
<feature type="strand" evidence="17">
    <location>
        <begin position="436"/>
        <end position="439"/>
    </location>
</feature>
<feature type="strand" evidence="16">
    <location>
        <begin position="443"/>
        <end position="446"/>
    </location>
</feature>
<feature type="turn" evidence="16">
    <location>
        <begin position="448"/>
        <end position="450"/>
    </location>
</feature>
<feature type="strand" evidence="16">
    <location>
        <begin position="453"/>
        <end position="456"/>
    </location>
</feature>
<feature type="strand" evidence="16">
    <location>
        <begin position="467"/>
        <end position="471"/>
    </location>
</feature>
<feature type="strand" evidence="16">
    <location>
        <begin position="474"/>
        <end position="478"/>
    </location>
</feature>
<feature type="strand" evidence="16">
    <location>
        <begin position="483"/>
        <end position="486"/>
    </location>
</feature>
<feature type="strand" evidence="16">
    <location>
        <begin position="490"/>
        <end position="494"/>
    </location>
</feature>
<feature type="turn" evidence="16">
    <location>
        <begin position="495"/>
        <end position="498"/>
    </location>
</feature>
<feature type="strand" evidence="16">
    <location>
        <begin position="499"/>
        <end position="503"/>
    </location>
</feature>
<feature type="strand" evidence="16">
    <location>
        <begin position="514"/>
        <end position="518"/>
    </location>
</feature>
<feature type="strand" evidence="16">
    <location>
        <begin position="521"/>
        <end position="525"/>
    </location>
</feature>
<feature type="strand" evidence="16">
    <location>
        <begin position="530"/>
        <end position="541"/>
    </location>
</feature>
<feature type="turn" evidence="16">
    <location>
        <begin position="542"/>
        <end position="545"/>
    </location>
</feature>
<feature type="strand" evidence="16">
    <location>
        <begin position="546"/>
        <end position="559"/>
    </location>
</feature>
<feature type="strand" evidence="16">
    <location>
        <begin position="561"/>
        <end position="566"/>
    </location>
</feature>
<comment type="function">
    <text evidence="4 5 6 7 8 9">Substrate-specific adapter of a BCR (BTB-CUL3-RBX1) E3 ubiquitin ligase complex that acts as a negative regulator of Wnt signaling pathway and ER-Golgi transport (PubMed:22358839, PubMed:27565346). The BCR(KLHL12) complex is involved in ER-Golgi transport by regulating the size of COPII coats, thereby playing a key role in collagen export, which is required for embryonic stem (ES) cells division: BCR(KLHL12) acts by mediating monoubiquitination of SEC31 (SEC31A or SEC31B) (PubMed:22358839, PubMed:27565346). The BCR(KLHL12) complex is also involved in neural crest specification: in response to cytosolic calcium increase, interacts with the heterodimer formed with PEF1 and PDCD6/ALG-2, leading to bridge together the BCR(KLHL12) complex and SEC31 (SEC31A or SEC31B), promoting monoubiquitination of SEC31 and subsequent collagen export (PubMed:27716508). As part of the BCR(KLHL12) complex, also acts as a negative regulator of the Wnt signaling pathway by mediating ubiquitination and subsequent proteolysis of DVL3 (PubMed:16547521). The BCR(KLHL12) complex also mediates polyubiquitination of DRD4 and PEF1, without leading to degradation of these proteins (PubMed:18303015, PubMed:20100572, PubMed:27716508).</text>
</comment>
<comment type="pathway">
    <text>Protein modification; protein ubiquitination.</text>
</comment>
<comment type="subunit">
    <text evidence="2 4 5 7 9">Component of the BCR(KLHL12) E3 ubiquitin ligase complex, at least composed of CUL3 and KLHL12 and RBX1 (PubMed:22358839). This complex interacts with DVL3 upon activation of the Wnt signaling pathway by WNT3A (PubMed:16547521). Interacts with DRD4, KLHL2 and SEC31A (PubMed:15383316, PubMed:18303015, PubMed:22358839). Interacts with PEF1 and PDCD6/ALG-2; interaction takes place in response to cytosolic calcium increase and leads to bridge together the BCR(KLHL12) complex and SEC31 (SEC31A or SEC31B) (PubMed:27716508).</text>
</comment>
<comment type="interaction">
    <interactant intactId="EBI-740929">
        <id>Q53G59</id>
    </interactant>
    <interactant intactId="EBI-2339564">
        <id>Q8N5I2</id>
        <label>ARRDC1</label>
    </interactant>
    <organismsDiffer>false</organismsDiffer>
    <experiments>4</experiments>
</comment>
<comment type="interaction">
    <interactant intactId="EBI-740929">
        <id>Q53G59</id>
    </interactant>
    <interactant intactId="EBI-930964">
        <id>P54253</id>
        <label>ATXN1</label>
    </interactant>
    <organismsDiffer>false</organismsDiffer>
    <experiments>8</experiments>
</comment>
<comment type="interaction">
    <interactant intactId="EBI-740929">
        <id>Q53G59</id>
    </interactant>
    <interactant intactId="EBI-347552">
        <id>P46379</id>
        <label>BAG6</label>
    </interactant>
    <organismsDiffer>false</organismsDiffer>
    <experiments>4</experiments>
</comment>
<comment type="interaction">
    <interactant intactId="EBI-740929">
        <id>Q53G59</id>
    </interactant>
    <interactant intactId="EBI-10988864">
        <id>P46379-2</id>
        <label>BAG6</label>
    </interactant>
    <organismsDiffer>false</organismsDiffer>
    <experiments>3</experiments>
</comment>
<comment type="interaction">
    <interactant intactId="EBI-740929">
        <id>Q53G59</id>
    </interactant>
    <interactant intactId="EBI-765407">
        <id>P41182</id>
        <label>BCL6</label>
    </interactant>
    <organismsDiffer>false</organismsDiffer>
    <experiments>3</experiments>
</comment>
<comment type="interaction">
    <interactant intactId="EBI-740929">
        <id>Q53G59</id>
    </interactant>
    <interactant intactId="EBI-2817707">
        <id>Q9BXJ5</id>
        <label>C1QTNF2</label>
    </interactant>
    <organismsDiffer>false</organismsDiffer>
    <experiments>6</experiments>
</comment>
<comment type="interaction">
    <interactant intactId="EBI-740929">
        <id>Q53G59</id>
    </interactant>
    <interactant intactId="EBI-10238571">
        <id>Q17RA1</id>
        <label>CARD10</label>
    </interactant>
    <organismsDiffer>false</organismsDiffer>
    <experiments>3</experiments>
</comment>
<comment type="interaction">
    <interactant intactId="EBI-740929">
        <id>Q53G59</id>
    </interactant>
    <interactant intactId="EBI-3923278">
        <id>Q6UXH8</id>
        <label>CCBE1</label>
    </interactant>
    <organismsDiffer>false</organismsDiffer>
    <experiments>3</experiments>
</comment>
<comment type="interaction">
    <interactant intactId="EBI-740929">
        <id>Q53G59</id>
    </interactant>
    <interactant intactId="EBI-12013534">
        <id>Q6UXH8-3</id>
        <label>CCBE1</label>
    </interactant>
    <organismsDiffer>false</organismsDiffer>
    <experiments>3</experiments>
</comment>
<comment type="interaction">
    <interactant intactId="EBI-740929">
        <id>Q53G59</id>
    </interactant>
    <interactant intactId="EBI-12214501">
        <id>P02461-2</id>
        <label>COL3A1</label>
    </interactant>
    <organismsDiffer>false</organismsDiffer>
    <experiments>3</experiments>
</comment>
<comment type="interaction">
    <interactant intactId="EBI-740929">
        <id>Q53G59</id>
    </interactant>
    <interactant intactId="EBI-456129">
        <id>Q13618</id>
        <label>CUL3</label>
    </interactant>
    <organismsDiffer>false</organismsDiffer>
    <experiments>24</experiments>
</comment>
<comment type="interaction">
    <interactant intactId="EBI-740929">
        <id>Q53G59</id>
    </interactant>
    <interactant intactId="EBI-10185025">
        <id>Q86TH3</id>
        <label>DVL1</label>
    </interactant>
    <organismsDiffer>false</organismsDiffer>
    <experiments>3</experiments>
</comment>
<comment type="interaction">
    <interactant intactId="EBI-740929">
        <id>Q53G59</id>
    </interactant>
    <interactant intactId="EBI-739789">
        <id>Q92997</id>
        <label>DVL3</label>
    </interactant>
    <organismsDiffer>false</organismsDiffer>
    <experiments>4</experiments>
</comment>
<comment type="interaction">
    <interactant intactId="EBI-740929">
        <id>Q53G59</id>
    </interactant>
    <interactant intactId="EBI-6658203">
        <id>Q86YD7</id>
        <label>FAM90A1</label>
    </interactant>
    <organismsDiffer>false</organismsDiffer>
    <experiments>3</experiments>
</comment>
<comment type="interaction">
    <interactant intactId="EBI-740929">
        <id>Q53G59</id>
    </interactant>
    <interactant intactId="EBI-8835653">
        <id>Q9UF56</id>
        <label>FBXL17</label>
    </interactant>
    <organismsDiffer>false</organismsDiffer>
    <experiments>11</experiments>
</comment>
<comment type="interaction">
    <interactant intactId="EBI-740929">
        <id>Q53G59</id>
    </interactant>
    <interactant intactId="EBI-1057190">
        <id>Q7Z6J4</id>
        <label>FGD2</label>
    </interactant>
    <organismsDiffer>false</organismsDiffer>
    <experiments>3</experiments>
</comment>
<comment type="interaction">
    <interactant intactId="EBI-740929">
        <id>Q53G59</id>
    </interactant>
    <interactant intactId="EBI-9641086">
        <id>P21333-2</id>
        <label>FLNA</label>
    </interactant>
    <organismsDiffer>false</organismsDiffer>
    <experiments>6</experiments>
</comment>
<comment type="interaction">
    <interactant intactId="EBI-740929">
        <id>Q53G59</id>
    </interactant>
    <interactant intactId="EBI-748515">
        <id>Q8IVS8</id>
        <label>GLYCTK</label>
    </interactant>
    <organismsDiffer>false</organismsDiffer>
    <experiments>3</experiments>
</comment>
<comment type="interaction">
    <interactant intactId="EBI-740929">
        <id>Q53G59</id>
    </interactant>
    <interactant intactId="EBI-466029">
        <id>P42858</id>
        <label>HTT</label>
    </interactant>
    <organismsDiffer>false</organismsDiffer>
    <experiments>3</experiments>
</comment>
<comment type="interaction">
    <interactant intactId="EBI-740929">
        <id>Q53G59</id>
    </interactant>
    <interactant intactId="EBI-10191038">
        <id>O95050</id>
        <label>INMT</label>
    </interactant>
    <organismsDiffer>false</organismsDiffer>
    <experiments>6</experiments>
</comment>
<comment type="interaction">
    <interactant intactId="EBI-740929">
        <id>Q53G59</id>
    </interactant>
    <interactant intactId="EBI-740929">
        <id>Q53G59</id>
        <label>KLHL12</label>
    </interactant>
    <organismsDiffer>false</organismsDiffer>
    <experiments>8</experiments>
</comment>
<comment type="interaction">
    <interactant intactId="EBI-740929">
        <id>Q53G59</id>
    </interactant>
    <interactant intactId="EBI-746999">
        <id>O95198</id>
        <label>KLHL2</label>
    </interactant>
    <organismsDiffer>false</organismsDiffer>
    <experiments>10</experiments>
</comment>
<comment type="interaction">
    <interactant intactId="EBI-740929">
        <id>Q53G59</id>
    </interactant>
    <interactant intactId="EBI-2510117">
        <id>Q6TFL4</id>
        <label>KLHL24</label>
    </interactant>
    <organismsDiffer>false</organismsDiffer>
    <experiments>6</experiments>
</comment>
<comment type="interaction">
    <interactant intactId="EBI-740929">
        <id>Q53G59</id>
    </interactant>
    <interactant intactId="EBI-10230467">
        <id>Q8N4I8</id>
        <label>KLHL3</label>
    </interactant>
    <organismsDiffer>false</organismsDiffer>
    <experiments>3</experiments>
</comment>
<comment type="interaction">
    <interactant intactId="EBI-740929">
        <id>Q53G59</id>
    </interactant>
    <interactant intactId="EBI-8524663">
        <id>Q9UH77</id>
        <label>KLHL3</label>
    </interactant>
    <organismsDiffer>false</organismsDiffer>
    <experiments>4</experiments>
</comment>
<comment type="interaction">
    <interactant intactId="EBI-740929">
        <id>Q53G59</id>
    </interactant>
    <interactant intactId="EBI-11024283">
        <id>Q9C0E8-2</id>
        <label>LNPK</label>
    </interactant>
    <organismsDiffer>false</organismsDiffer>
    <experiments>6</experiments>
</comment>
<comment type="interaction">
    <interactant intactId="EBI-740929">
        <id>Q53G59</id>
    </interactant>
    <interactant intactId="EBI-739832">
        <id>Q8TBB1</id>
        <label>LNX1</label>
    </interactant>
    <organismsDiffer>false</organismsDiffer>
    <experiments>4</experiments>
</comment>
<comment type="interaction">
    <interactant intactId="EBI-740929">
        <id>Q53G59</id>
    </interactant>
    <interactant intactId="EBI-1004115">
        <id>Q15691</id>
        <label>MAPRE1</label>
    </interactant>
    <organismsDiffer>false</organismsDiffer>
    <experiments>3</experiments>
</comment>
<comment type="interaction">
    <interactant intactId="EBI-740929">
        <id>Q53G59</id>
    </interactant>
    <interactant intactId="EBI-394558">
        <id>Q71SY5</id>
        <label>MED25</label>
    </interactant>
    <organismsDiffer>false</organismsDiffer>
    <experiments>3</experiments>
</comment>
<comment type="interaction">
    <interactant intactId="EBI-740929">
        <id>Q53G59</id>
    </interactant>
    <interactant intactId="EBI-711788">
        <id>Q00013</id>
        <label>MPP1</label>
    </interactant>
    <organismsDiffer>false</organismsDiffer>
    <experiments>6</experiments>
</comment>
<comment type="interaction">
    <interactant intactId="EBI-740929">
        <id>Q53G59</id>
    </interactant>
    <interactant intactId="EBI-723524">
        <id>Q7Z7H8</id>
        <label>MRPL10</label>
    </interactant>
    <organismsDiffer>false</organismsDiffer>
    <experiments>3</experiments>
</comment>
<comment type="interaction">
    <interactant intactId="EBI-740929">
        <id>Q53G59</id>
    </interactant>
    <interactant intactId="EBI-7950783">
        <id>Q96JP2</id>
        <label>MYO15B</label>
    </interactant>
    <organismsDiffer>false</organismsDiffer>
    <experiments>3</experiments>
</comment>
<comment type="interaction">
    <interactant intactId="EBI-740929">
        <id>Q53G59</id>
    </interactant>
    <interactant intactId="EBI-741158">
        <id>Q96HA8</id>
        <label>NTAQ1</label>
    </interactant>
    <organismsDiffer>false</organismsDiffer>
    <experiments>8</experiments>
</comment>
<comment type="interaction">
    <interactant intactId="EBI-740929">
        <id>Q53G59</id>
    </interactant>
    <interactant intactId="EBI-641237">
        <id>P09619</id>
        <label>PDGFRB</label>
    </interactant>
    <organismsDiffer>false</organismsDiffer>
    <experiments>6</experiments>
</comment>
<comment type="interaction">
    <interactant intactId="EBI-740929">
        <id>Q53G59</id>
    </interactant>
    <interactant intactId="EBI-724639">
        <id>Q9UBV8</id>
        <label>PEF1</label>
    </interactant>
    <organismsDiffer>false</organismsDiffer>
    <experiments>10</experiments>
</comment>
<comment type="interaction">
    <interactant intactId="EBI-740929">
        <id>Q53G59</id>
    </interactant>
    <interactant intactId="EBI-12394782">
        <id>Q9H4M7-2</id>
        <label>PLEKHA4</label>
    </interactant>
    <organismsDiffer>false</organismsDiffer>
    <experiments>3</experiments>
</comment>
<comment type="interaction">
    <interactant intactId="EBI-740929">
        <id>Q53G59</id>
    </interactant>
    <interactant intactId="EBI-1045072">
        <id>Q96T60</id>
        <label>PNKP</label>
    </interactant>
    <organismsDiffer>false</organismsDiffer>
    <experiments>3</experiments>
</comment>
<comment type="interaction">
    <interactant intactId="EBI-740929">
        <id>Q53G59</id>
    </interactant>
    <interactant intactId="EBI-716569">
        <id>P28340</id>
        <label>POLD1</label>
    </interactant>
    <organismsDiffer>false</organismsDiffer>
    <experiments>3</experiments>
</comment>
<comment type="interaction">
    <interactant intactId="EBI-740929">
        <id>Q53G59</id>
    </interactant>
    <interactant intactId="EBI-740924">
        <id>Q9NZ81</id>
        <label>PRR13</label>
    </interactant>
    <organismsDiffer>false</organismsDiffer>
    <experiments>7</experiments>
</comment>
<comment type="interaction">
    <interactant intactId="EBI-740929">
        <id>Q53G59</id>
    </interactant>
    <interactant intactId="EBI-2856274">
        <id>Q3MIN7</id>
        <label>RGL3</label>
    </interactant>
    <organismsDiffer>false</organismsDiffer>
    <experiments>3</experiments>
</comment>
<comment type="interaction">
    <interactant intactId="EBI-740929">
        <id>Q53G59</id>
    </interactant>
    <interactant intactId="EBI-366017">
        <id>Q13671</id>
        <label>RIN1</label>
    </interactant>
    <organismsDiffer>false</organismsDiffer>
    <experiments>3</experiments>
</comment>
<comment type="interaction">
    <interactant intactId="EBI-740929">
        <id>Q53G59</id>
    </interactant>
    <interactant intactId="EBI-2340927">
        <id>P78317</id>
        <label>RNF4</label>
    </interactant>
    <organismsDiffer>false</organismsDiffer>
    <experiments>3</experiments>
</comment>
<comment type="interaction">
    <interactant intactId="EBI-740929">
        <id>Q53G59</id>
    </interactant>
    <interactant intactId="EBI-10189722">
        <id>Q8N5L8</id>
        <label>RPP25L</label>
    </interactant>
    <organismsDiffer>false</organismsDiffer>
    <experiments>6</experiments>
</comment>
<comment type="interaction">
    <interactant intactId="EBI-740929">
        <id>Q53G59</id>
    </interactant>
    <interactant intactId="EBI-727004">
        <id>O00560</id>
        <label>SDCBP</label>
    </interactant>
    <organismsDiffer>false</organismsDiffer>
    <experiments>8</experiments>
</comment>
<comment type="interaction">
    <interactant intactId="EBI-740929">
        <id>Q53G59</id>
    </interactant>
    <interactant intactId="EBI-744896">
        <id>Q7Z614</id>
        <label>SNX20</label>
    </interactant>
    <organismsDiffer>false</organismsDiffer>
    <experiments>4</experiments>
</comment>
<comment type="interaction">
    <interactant intactId="EBI-740929">
        <id>Q53G59</id>
    </interactant>
    <interactant intactId="EBI-12336127">
        <id>Q7Z614-3</id>
        <label>SNX20</label>
    </interactant>
    <organismsDiffer>false</organismsDiffer>
    <experiments>3</experiments>
</comment>
<comment type="interaction">
    <interactant intactId="EBI-740929">
        <id>Q53G59</id>
    </interactant>
    <interactant intactId="EBI-7131783">
        <id>Q8N205</id>
        <label>SYNE4</label>
    </interactant>
    <organismsDiffer>false</organismsDiffer>
    <experiments>3</experiments>
</comment>
<comment type="interaction">
    <interactant intactId="EBI-740929">
        <id>Q53G59</id>
    </interactant>
    <interactant intactId="EBI-10261452">
        <id>Q8IV04</id>
        <label>TBC1D10C</label>
    </interactant>
    <organismsDiffer>false</organismsDiffer>
    <experiments>6</experiments>
</comment>
<comment type="interaction">
    <interactant intactId="EBI-740929">
        <id>Q53G59</id>
    </interactant>
    <interactant intactId="EBI-11955057">
        <id>Q8N8B7-2</id>
        <label>TCEANC</label>
    </interactant>
    <organismsDiffer>false</organismsDiffer>
    <experiments>3</experiments>
</comment>
<comment type="interaction">
    <interactant intactId="EBI-740929">
        <id>Q53G59</id>
    </interactant>
    <interactant intactId="EBI-1050303">
        <id>Q6IQ55</id>
        <label>TTBK2</label>
    </interactant>
    <organismsDiffer>false</organismsDiffer>
    <experiments>6</experiments>
</comment>
<comment type="interaction">
    <interactant intactId="EBI-740929">
        <id>Q53G59</id>
    </interactant>
    <interactant intactId="EBI-10180829">
        <id>Q7KZS0</id>
        <label>UBE2I</label>
    </interactant>
    <organismsDiffer>false</organismsDiffer>
    <experiments>6</experiments>
</comment>
<comment type="interaction">
    <interactant intactId="EBI-740929">
        <id>Q53G59</id>
    </interactant>
    <interactant intactId="EBI-2799898">
        <id>P49765</id>
        <label>VEGFB</label>
    </interactant>
    <organismsDiffer>false</organismsDiffer>
    <experiments>3</experiments>
</comment>
<comment type="interaction">
    <interactant intactId="EBI-740929">
        <id>Q53G59</id>
    </interactant>
    <interactant intactId="EBI-10256629">
        <id>Q7LAP4</id>
        <label>VEGFB</label>
    </interactant>
    <organismsDiffer>false</organismsDiffer>
    <experiments>3</experiments>
</comment>
<comment type="interaction">
    <interactant intactId="EBI-740929">
        <id>Q53G59</id>
    </interactant>
    <interactant intactId="EBI-12157263">
        <id>P40337-2</id>
        <label>VHL</label>
    </interactant>
    <organismsDiffer>false</organismsDiffer>
    <experiments>3</experiments>
</comment>
<comment type="interaction">
    <interactant intactId="EBI-740929">
        <id>Q53G59</id>
    </interactant>
    <interactant intactId="EBI-10173066">
        <id>A2RRL9</id>
        <label>ZBP1</label>
    </interactant>
    <organismsDiffer>false</organismsDiffer>
    <experiments>3</experiments>
</comment>
<comment type="interaction">
    <interactant intactId="EBI-740929">
        <id>Q53G59</id>
    </interactant>
    <interactant intactId="EBI-2564133">
        <id>Q9P1Z0</id>
        <label>ZBTB4</label>
    </interactant>
    <organismsDiffer>false</organismsDiffer>
    <experiments>3</experiments>
</comment>
<comment type="subcellular location">
    <subcellularLocation>
        <location evidence="7 9">Cytoplasmic vesicle</location>
        <location evidence="7 9">COPII-coated vesicle</location>
    </subcellularLocation>
</comment>
<comment type="alternative products">
    <event type="alternative splicing"/>
    <isoform>
        <id>Q53G59-1</id>
        <name>1</name>
        <sequence type="displayed"/>
    </isoform>
    <isoform>
        <id>Q53G59-2</id>
        <name>2</name>
        <sequence type="described" ref="VSP_042975"/>
    </isoform>
</comment>
<comment type="tissue specificity">
    <text evidence="2 3">Ubiquitously expressed. Highly expressed in testis and at lower levels in the submandibular salivary gland.</text>
</comment>
<comment type="domain">
    <text>The BTB domain is required for interaction with CUL3.</text>
</comment>
<comment type="PTM">
    <text evidence="10">Ubiquitinated by the SCF(FBXL17) complex, leading to its degradation by the proteasome: ubiquitination by the SCF(FBXL17) complex takes place when aberrant BTB domain dimers are formed.</text>
</comment>
<name>KLH12_HUMAN</name>
<protein>
    <recommendedName>
        <fullName>Kelch-like protein 12</fullName>
    </recommendedName>
    <alternativeName>
        <fullName evidence="14">CUL3-interacting protein 1</fullName>
    </alternativeName>
    <alternativeName>
        <fullName evidence="13">DKIR homolog</fullName>
        <shortName evidence="13">hDKIR</shortName>
    </alternativeName>
</protein>
<keyword id="KW-0002">3D-structure</keyword>
<keyword id="KW-0025">Alternative splicing</keyword>
<keyword id="KW-0968">Cytoplasmic vesicle</keyword>
<keyword id="KW-0931">ER-Golgi transport</keyword>
<keyword id="KW-0880">Kelch repeat</keyword>
<keyword id="KW-1267">Proteomics identification</keyword>
<keyword id="KW-1185">Reference proteome</keyword>
<keyword id="KW-0677">Repeat</keyword>
<keyword id="KW-0813">Transport</keyword>
<keyword id="KW-0832">Ubl conjugation</keyword>
<keyword id="KW-0833">Ubl conjugation pathway</keyword>
<keyword id="KW-0879">Wnt signaling pathway</keyword>
<proteinExistence type="evidence at protein level"/>
<gene>
    <name type="primary">KLHL12</name>
    <name evidence="14" type="synonym">C3IP1</name>
</gene>
<dbReference type="EMBL" id="AF190900">
    <property type="protein sequence ID" value="AAG17175.1"/>
    <property type="molecule type" value="mRNA"/>
</dbReference>
<dbReference type="EMBL" id="AK027656">
    <property type="protein sequence ID" value="BAB55271.1"/>
    <property type="molecule type" value="mRNA"/>
</dbReference>
<dbReference type="EMBL" id="AK301791">
    <property type="protein sequence ID" value="BAH13554.1"/>
    <property type="molecule type" value="mRNA"/>
</dbReference>
<dbReference type="EMBL" id="AK223072">
    <property type="protein sequence ID" value="BAD96792.1"/>
    <property type="molecule type" value="mRNA"/>
</dbReference>
<dbReference type="EMBL" id="AC096632">
    <property type="status" value="NOT_ANNOTATED_CDS"/>
    <property type="molecule type" value="Genomic_DNA"/>
</dbReference>
<dbReference type="EMBL" id="BC003183">
    <property type="protein sequence ID" value="AAH03183.1"/>
    <property type="molecule type" value="mRNA"/>
</dbReference>
<dbReference type="EMBL" id="BC004175">
    <property type="protein sequence ID" value="AAH04175.1"/>
    <property type="molecule type" value="mRNA"/>
</dbReference>
<dbReference type="CCDS" id="CCDS1429.1">
    <molecule id="Q53G59-1"/>
</dbReference>
<dbReference type="RefSeq" id="NP_001289980.1">
    <molecule id="Q53G59-2"/>
    <property type="nucleotide sequence ID" value="NM_001303051.2"/>
</dbReference>
<dbReference type="RefSeq" id="NP_001290038.1">
    <property type="nucleotide sequence ID" value="NM_001303109.1"/>
</dbReference>
<dbReference type="RefSeq" id="NP_067646.1">
    <molecule id="Q53G59-1"/>
    <property type="nucleotide sequence ID" value="NM_021633.4"/>
</dbReference>
<dbReference type="PDB" id="2VPJ">
    <property type="method" value="X-ray"/>
    <property type="resolution" value="1.85 A"/>
    <property type="chains" value="A=268-567"/>
</dbReference>
<dbReference type="PDB" id="6TTK">
    <property type="method" value="X-ray"/>
    <property type="resolution" value="2.38 A"/>
    <property type="chains" value="A/B/C/D=268-567"/>
</dbReference>
<dbReference type="PDB" id="6V7O">
    <property type="method" value="X-ray"/>
    <property type="resolution" value="2.90 A"/>
    <property type="chains" value="A/B=268-567"/>
</dbReference>
<dbReference type="PDB" id="8OIO">
    <property type="method" value="X-ray"/>
    <property type="resolution" value="1.95 A"/>
    <property type="chains" value="A/B/C/D=268-567"/>
</dbReference>
<dbReference type="PDB" id="8RBH">
    <property type="method" value="X-ray"/>
    <property type="resolution" value="1.88 A"/>
    <property type="chains" value="A/B=268-567"/>
</dbReference>
<dbReference type="PDBsum" id="2VPJ"/>
<dbReference type="PDBsum" id="6TTK"/>
<dbReference type="PDBsum" id="6V7O"/>
<dbReference type="PDBsum" id="8OIO"/>
<dbReference type="PDBsum" id="8RBH"/>
<dbReference type="SMR" id="Q53G59"/>
<dbReference type="BioGRID" id="121890">
    <property type="interactions" value="115"/>
</dbReference>
<dbReference type="ComplexPortal" id="CPX-8089">
    <property type="entry name" value="CRL3 E3 ubiquitin ligase complex, KLHL12 variant"/>
</dbReference>
<dbReference type="CORUM" id="Q53G59"/>
<dbReference type="FunCoup" id="Q53G59">
    <property type="interactions" value="1238"/>
</dbReference>
<dbReference type="IntAct" id="Q53G59">
    <property type="interactions" value="111"/>
</dbReference>
<dbReference type="MINT" id="Q53G59"/>
<dbReference type="STRING" id="9606.ENSP00000356230"/>
<dbReference type="iPTMnet" id="Q53G59"/>
<dbReference type="MetOSite" id="Q53G59"/>
<dbReference type="PhosphoSitePlus" id="Q53G59"/>
<dbReference type="BioMuta" id="KLHL12"/>
<dbReference type="DMDM" id="97054498"/>
<dbReference type="jPOST" id="Q53G59"/>
<dbReference type="MassIVE" id="Q53G59"/>
<dbReference type="PaxDb" id="9606-ENSP00000356230"/>
<dbReference type="PeptideAtlas" id="Q53G59"/>
<dbReference type="ProteomicsDB" id="62474">
    <molecule id="Q53G59-1"/>
</dbReference>
<dbReference type="ProteomicsDB" id="62475">
    <molecule id="Q53G59-2"/>
</dbReference>
<dbReference type="Pumba" id="Q53G59"/>
<dbReference type="Antibodypedia" id="34533">
    <property type="antibodies" value="339 antibodies from 30 providers"/>
</dbReference>
<dbReference type="DNASU" id="59349"/>
<dbReference type="Ensembl" id="ENST00000367261.8">
    <molecule id="Q53G59-1"/>
    <property type="protein sequence ID" value="ENSP00000356230.3"/>
    <property type="gene ID" value="ENSG00000117153.16"/>
</dbReference>
<dbReference type="GeneID" id="59349"/>
<dbReference type="KEGG" id="hsa:59349"/>
<dbReference type="MANE-Select" id="ENST00000367261.8">
    <property type="protein sequence ID" value="ENSP00000356230.3"/>
    <property type="RefSeq nucleotide sequence ID" value="NM_021633.4"/>
    <property type="RefSeq protein sequence ID" value="NP_067646.1"/>
</dbReference>
<dbReference type="UCSC" id="uc001gyo.2">
    <molecule id="Q53G59-1"/>
    <property type="organism name" value="human"/>
</dbReference>
<dbReference type="AGR" id="HGNC:19360"/>
<dbReference type="CTD" id="59349"/>
<dbReference type="DisGeNET" id="59349"/>
<dbReference type="GeneCards" id="KLHL12"/>
<dbReference type="HGNC" id="HGNC:19360">
    <property type="gene designation" value="KLHL12"/>
</dbReference>
<dbReference type="HPA" id="ENSG00000117153">
    <property type="expression patterns" value="Low tissue specificity"/>
</dbReference>
<dbReference type="MIM" id="614522">
    <property type="type" value="gene"/>
</dbReference>
<dbReference type="neXtProt" id="NX_Q53G59"/>
<dbReference type="OpenTargets" id="ENSG00000117153"/>
<dbReference type="PharmGKB" id="PA134952416"/>
<dbReference type="VEuPathDB" id="HostDB:ENSG00000117153"/>
<dbReference type="eggNOG" id="KOG4441">
    <property type="taxonomic scope" value="Eukaryota"/>
</dbReference>
<dbReference type="GeneTree" id="ENSGT00940000155199"/>
<dbReference type="HOGENOM" id="CLU_004253_14_2_1"/>
<dbReference type="InParanoid" id="Q53G59"/>
<dbReference type="OMA" id="ETHNCLE"/>
<dbReference type="OrthoDB" id="45365at2759"/>
<dbReference type="PAN-GO" id="Q53G59">
    <property type="GO annotations" value="3 GO annotations based on evolutionary models"/>
</dbReference>
<dbReference type="PhylomeDB" id="Q53G59"/>
<dbReference type="TreeFam" id="TF329218"/>
<dbReference type="PathwayCommons" id="Q53G59"/>
<dbReference type="Reactome" id="R-HSA-4641258">
    <property type="pathway name" value="Degradation of DVL"/>
</dbReference>
<dbReference type="SignaLink" id="Q53G59"/>
<dbReference type="SIGNOR" id="Q53G59"/>
<dbReference type="UniPathway" id="UPA00143"/>
<dbReference type="BioGRID-ORCS" id="59349">
    <property type="hits" value="22 hits in 1192 CRISPR screens"/>
</dbReference>
<dbReference type="ChiTaRS" id="KLHL12">
    <property type="organism name" value="human"/>
</dbReference>
<dbReference type="EvolutionaryTrace" id="Q53G59"/>
<dbReference type="GeneWiki" id="KLHL12"/>
<dbReference type="GenomeRNAi" id="59349"/>
<dbReference type="Pharos" id="Q53G59">
    <property type="development level" value="Tbio"/>
</dbReference>
<dbReference type="PRO" id="PR:Q53G59"/>
<dbReference type="Proteomes" id="UP000005640">
    <property type="component" value="Chromosome 1"/>
</dbReference>
<dbReference type="RNAct" id="Q53G59">
    <property type="molecule type" value="protein"/>
</dbReference>
<dbReference type="Bgee" id="ENSG00000117153">
    <property type="expression patterns" value="Expressed in oocyte and 188 other cell types or tissues"/>
</dbReference>
<dbReference type="ExpressionAtlas" id="Q53G59">
    <property type="expression patterns" value="baseline and differential"/>
</dbReference>
<dbReference type="GO" id="GO:0034451">
    <property type="term" value="C:centriolar satellite"/>
    <property type="evidence" value="ECO:0000314"/>
    <property type="project" value="HPA"/>
</dbReference>
<dbReference type="GO" id="GO:0030127">
    <property type="term" value="C:COPII vesicle coat"/>
    <property type="evidence" value="ECO:0000314"/>
    <property type="project" value="UniProtKB"/>
</dbReference>
<dbReference type="GO" id="GO:0030134">
    <property type="term" value="C:COPII-coated ER to Golgi transport vesicle"/>
    <property type="evidence" value="ECO:0000314"/>
    <property type="project" value="UniProtKB"/>
</dbReference>
<dbReference type="GO" id="GO:0031463">
    <property type="term" value="C:Cul3-RING ubiquitin ligase complex"/>
    <property type="evidence" value="ECO:0000314"/>
    <property type="project" value="UniProtKB"/>
</dbReference>
<dbReference type="GO" id="GO:0005737">
    <property type="term" value="C:cytoplasm"/>
    <property type="evidence" value="ECO:0000318"/>
    <property type="project" value="GO_Central"/>
</dbReference>
<dbReference type="GO" id="GO:0005829">
    <property type="term" value="C:cytosol"/>
    <property type="evidence" value="ECO:0000304"/>
    <property type="project" value="Reactome"/>
</dbReference>
<dbReference type="GO" id="GO:0043231">
    <property type="term" value="C:intracellular membrane-bounded organelle"/>
    <property type="evidence" value="ECO:0000314"/>
    <property type="project" value="HPA"/>
</dbReference>
<dbReference type="GO" id="GO:0042802">
    <property type="term" value="F:identical protein binding"/>
    <property type="evidence" value="ECO:0000353"/>
    <property type="project" value="IntAct"/>
</dbReference>
<dbReference type="GO" id="GO:1990756">
    <property type="term" value="F:ubiquitin-like ligase-substrate adaptor activity"/>
    <property type="evidence" value="ECO:0000318"/>
    <property type="project" value="GO_Central"/>
</dbReference>
<dbReference type="GO" id="GO:0048208">
    <property type="term" value="P:COPII vesicle coating"/>
    <property type="evidence" value="ECO:0000315"/>
    <property type="project" value="UniProtKB"/>
</dbReference>
<dbReference type="GO" id="GO:0006888">
    <property type="term" value="P:endoplasmic reticulum to Golgi vesicle-mediated transport"/>
    <property type="evidence" value="ECO:0000314"/>
    <property type="project" value="UniProtKB"/>
</dbReference>
<dbReference type="GO" id="GO:0014032">
    <property type="term" value="P:neural crest cell development"/>
    <property type="evidence" value="ECO:0000315"/>
    <property type="project" value="UniProtKB"/>
</dbReference>
<dbReference type="GO" id="GO:0014029">
    <property type="term" value="P:neural crest formation"/>
    <property type="evidence" value="ECO:0000315"/>
    <property type="project" value="UniProtKB"/>
</dbReference>
<dbReference type="GO" id="GO:0043161">
    <property type="term" value="P:proteasome-mediated ubiquitin-dependent protein catabolic process"/>
    <property type="evidence" value="ECO:0000318"/>
    <property type="project" value="GO_Central"/>
</dbReference>
<dbReference type="GO" id="GO:0006513">
    <property type="term" value="P:protein monoubiquitination"/>
    <property type="evidence" value="ECO:0000314"/>
    <property type="project" value="UniProtKB"/>
</dbReference>
<dbReference type="GO" id="GO:0016055">
    <property type="term" value="P:Wnt signaling pathway"/>
    <property type="evidence" value="ECO:0000315"/>
    <property type="project" value="UniProtKB"/>
</dbReference>
<dbReference type="CDD" id="cd18452">
    <property type="entry name" value="BACK_KLHL12"/>
    <property type="match status" value="1"/>
</dbReference>
<dbReference type="CDD" id="cd18242">
    <property type="entry name" value="BTB_POZ_KLHL12_C3IP1_DKIR"/>
    <property type="match status" value="1"/>
</dbReference>
<dbReference type="FunFam" id="2.120.10.80:FF:000011">
    <property type="entry name" value="Kelch like family member 12"/>
    <property type="match status" value="1"/>
</dbReference>
<dbReference type="FunFam" id="1.25.40.420:FF:000001">
    <property type="entry name" value="Kelch-like family member 12"/>
    <property type="match status" value="1"/>
</dbReference>
<dbReference type="FunFam" id="3.30.710.10:FF:000001">
    <property type="entry name" value="Kelch-like family member 20"/>
    <property type="match status" value="1"/>
</dbReference>
<dbReference type="Gene3D" id="1.25.40.420">
    <property type="match status" value="1"/>
</dbReference>
<dbReference type="Gene3D" id="2.120.10.80">
    <property type="entry name" value="Kelch-type beta propeller"/>
    <property type="match status" value="1"/>
</dbReference>
<dbReference type="Gene3D" id="3.30.710.10">
    <property type="entry name" value="Potassium Channel Kv1.1, Chain A"/>
    <property type="match status" value="1"/>
</dbReference>
<dbReference type="InterPro" id="IPR011705">
    <property type="entry name" value="BACK"/>
</dbReference>
<dbReference type="InterPro" id="IPR017096">
    <property type="entry name" value="BTB-kelch_protein"/>
</dbReference>
<dbReference type="InterPro" id="IPR000210">
    <property type="entry name" value="BTB/POZ_dom"/>
</dbReference>
<dbReference type="InterPro" id="IPR015915">
    <property type="entry name" value="Kelch-typ_b-propeller"/>
</dbReference>
<dbReference type="InterPro" id="IPR006652">
    <property type="entry name" value="Kelch_1"/>
</dbReference>
<dbReference type="InterPro" id="IPR011333">
    <property type="entry name" value="SKP1/BTB/POZ_sf"/>
</dbReference>
<dbReference type="PANTHER" id="PTHR24412">
    <property type="entry name" value="KELCH PROTEIN"/>
    <property type="match status" value="1"/>
</dbReference>
<dbReference type="PANTHER" id="PTHR24412:SF494">
    <property type="entry name" value="KELCH-LIKE PROTEIN 12"/>
    <property type="match status" value="1"/>
</dbReference>
<dbReference type="Pfam" id="PF07707">
    <property type="entry name" value="BACK"/>
    <property type="match status" value="1"/>
</dbReference>
<dbReference type="Pfam" id="PF00651">
    <property type="entry name" value="BTB"/>
    <property type="match status" value="1"/>
</dbReference>
<dbReference type="Pfam" id="PF01344">
    <property type="entry name" value="Kelch_1"/>
    <property type="match status" value="2"/>
</dbReference>
<dbReference type="Pfam" id="PF24681">
    <property type="entry name" value="Kelch_KLHDC2_KLHL20_DRC7"/>
    <property type="match status" value="1"/>
</dbReference>
<dbReference type="PIRSF" id="PIRSF037037">
    <property type="entry name" value="Kelch-like_protein_gigaxonin"/>
    <property type="match status" value="1"/>
</dbReference>
<dbReference type="PRINTS" id="PR00501">
    <property type="entry name" value="KELCHREPEAT"/>
</dbReference>
<dbReference type="SMART" id="SM00875">
    <property type="entry name" value="BACK"/>
    <property type="match status" value="1"/>
</dbReference>
<dbReference type="SMART" id="SM00225">
    <property type="entry name" value="BTB"/>
    <property type="match status" value="1"/>
</dbReference>
<dbReference type="SMART" id="SM00612">
    <property type="entry name" value="Kelch"/>
    <property type="match status" value="6"/>
</dbReference>
<dbReference type="SUPFAM" id="SSF117281">
    <property type="entry name" value="Kelch motif"/>
    <property type="match status" value="1"/>
</dbReference>
<dbReference type="SUPFAM" id="SSF54695">
    <property type="entry name" value="POZ domain"/>
    <property type="match status" value="1"/>
</dbReference>
<dbReference type="PROSITE" id="PS50097">
    <property type="entry name" value="BTB"/>
    <property type="match status" value="1"/>
</dbReference>
<sequence length="568" mass="63277">MGGIMAPKDIMTNTHAKSILNSMNSLRKSNTLCDVTLRVEQKDFPAHRIVLAACSDYFCAMFTSELSEKGKPYVDIQGLTASTMEILLDFVYTETVHVTVENVQELLPAACLLQLKGVKQACCEFLESQLDPSNCLGIRDFAETHNCVDLMQAAEVFSQKHFPEVVQHEEFILLSQGEVEKLIKCDEIQVDSEEPVFEAVINWVKHAKKEREESLPNLLQYVRMPLLTPRYITDVIDAEPFIRCSLQCRDLVDEAKKFHLRPELRSQMQGPRTRARLGANEVLLVVGGFGSQQSPIDVVEKYDPKTQEWSFLPSITRKRRYVASVSLHDRIYVIGGYDGRSRLSSVECLDYTADEDGVWYSVAPMNVRRGLAGATTLGDMIYVSGGFDGSRRHTSMERYDPNIDQWSMLGDMQTAREGAGLVVASGVIYCLGGYDGLNILNSVEKYDPHTGHWTNVTPMATKRSGAGVALLNDHIYVVGGFDGTAHLSSVEAYNIRTDSWTTVTSMTTPRCYVGATVLRGRLYAIAGYDGNSLLSSIECYDPIIDSWEVVTSMGTQRCDAGVCVLREK</sequence>
<organism>
    <name type="scientific">Homo sapiens</name>
    <name type="common">Human</name>
    <dbReference type="NCBI Taxonomy" id="9606"/>
    <lineage>
        <taxon>Eukaryota</taxon>
        <taxon>Metazoa</taxon>
        <taxon>Chordata</taxon>
        <taxon>Craniata</taxon>
        <taxon>Vertebrata</taxon>
        <taxon>Euteleostomi</taxon>
        <taxon>Mammalia</taxon>
        <taxon>Eutheria</taxon>
        <taxon>Euarchontoglires</taxon>
        <taxon>Primates</taxon>
        <taxon>Haplorrhini</taxon>
        <taxon>Catarrhini</taxon>
        <taxon>Hominidae</taxon>
        <taxon>Homo</taxon>
    </lineage>
</organism>